<protein>
    <recommendedName>
        <fullName evidence="6">Selenoprotein M</fullName>
    </recommendedName>
</protein>
<proteinExistence type="evidence at transcript level"/>
<evidence type="ECO:0000250" key="1"/>
<evidence type="ECO:0000250" key="2">
    <source>
        <dbReference type="UniProtKB" id="Q8WWX9"/>
    </source>
</evidence>
<evidence type="ECO:0000255" key="3"/>
<evidence type="ECO:0000256" key="4">
    <source>
        <dbReference type="SAM" id="MobiDB-lite"/>
    </source>
</evidence>
<evidence type="ECO:0000269" key="5">
    <source>
    </source>
</evidence>
<evidence type="ECO:0000303" key="6">
    <source>
    </source>
</evidence>
<evidence type="ECO:0000305" key="7"/>
<evidence type="ECO:0000312" key="8">
    <source>
        <dbReference type="EMBL" id="ADU25500.1"/>
    </source>
</evidence>
<comment type="function">
    <text evidence="5">May function as a thiol-disulfide oxidoreductase that participates in disulfide bond formation. Involved in the regulation of reproduction during the period of rapid gonadal development.</text>
</comment>
<comment type="subcellular location">
    <subcellularLocation>
        <location evidence="3">Endoplasmic reticulum</location>
    </subcellularLocation>
</comment>
<comment type="tissue specificity">
    <text evidence="5">High expression levels observed in hepatopancreas, testis, ovaries and intestine. Also expressed in heart, stomach, gills, cranial ganglia, muscle and hematocytes.</text>
</comment>
<comment type="developmental stage">
    <text evidence="5">During reproduction, expression in ovary and testis increases rapidly and significantly at stage III-1 (August-September), with peak expression being reached in September. The highest expression level in the hepatopancreas is detected at stage IV. In hemolymph, the expression is high during stage III-1, and then decreases significantly from stage III-2 onwards.</text>
</comment>
<comment type="similarity">
    <text evidence="7">Belongs to the selenoprotein M/F family.</text>
</comment>
<dbReference type="EMBL" id="HQ259302">
    <property type="protein sequence ID" value="ADU25500.1"/>
    <property type="molecule type" value="mRNA"/>
</dbReference>
<dbReference type="EnsemblMetazoa" id="XM_050850734.1">
    <property type="protein sequence ID" value="XP_050706691.1"/>
    <property type="gene ID" value="LOC126992052"/>
</dbReference>
<dbReference type="OrthoDB" id="25165at2759"/>
<dbReference type="GO" id="GO:0005788">
    <property type="term" value="C:endoplasmic reticulum lumen"/>
    <property type="evidence" value="ECO:0007669"/>
    <property type="project" value="TreeGrafter"/>
</dbReference>
<dbReference type="GO" id="GO:0016491">
    <property type="term" value="F:oxidoreductase activity"/>
    <property type="evidence" value="ECO:0007669"/>
    <property type="project" value="TreeGrafter"/>
</dbReference>
<dbReference type="Gene3D" id="3.40.30.50">
    <property type="entry name" value="Sep15/SelM thioredoxin-like domain, active-site redox motif"/>
    <property type="match status" value="1"/>
</dbReference>
<dbReference type="InterPro" id="IPR038219">
    <property type="entry name" value="Sep15/SelM_sf"/>
</dbReference>
<dbReference type="InterPro" id="IPR039992">
    <property type="entry name" value="Sep15_SelM"/>
</dbReference>
<dbReference type="InterPro" id="IPR014912">
    <property type="entry name" value="Sep15_SelM_dom"/>
</dbReference>
<dbReference type="InterPro" id="IPR036249">
    <property type="entry name" value="Thioredoxin-like_sf"/>
</dbReference>
<dbReference type="PANTHER" id="PTHR13077">
    <property type="entry name" value="SELENOPROTEIN F"/>
    <property type="match status" value="1"/>
</dbReference>
<dbReference type="PANTHER" id="PTHR13077:SF7">
    <property type="entry name" value="SELENOPROTEIN M"/>
    <property type="match status" value="1"/>
</dbReference>
<dbReference type="Pfam" id="PF08806">
    <property type="entry name" value="Sep15_SelM"/>
    <property type="match status" value="1"/>
</dbReference>
<dbReference type="SUPFAM" id="SSF52833">
    <property type="entry name" value="Thioredoxin-like"/>
    <property type="match status" value="1"/>
</dbReference>
<dbReference type="PROSITE" id="PS00014">
    <property type="entry name" value="ER_TARGET"/>
    <property type="match status" value="1"/>
</dbReference>
<sequence>MARGLAVFFLLAGACLALAEDVVDKGVAKARVESCSGUQLNRYPGAKQFIQEDLPLFHNTKFQHIGGAAPELLLLNKQDQELERFDLKKLSREEINELMIKKGFYKKSSKDEQVPEEYQEGPYMEKEEL</sequence>
<organism>
    <name type="scientific">Eriocheir sinensis</name>
    <name type="common">Chinese mitten crab</name>
    <dbReference type="NCBI Taxonomy" id="95602"/>
    <lineage>
        <taxon>Eukaryota</taxon>
        <taxon>Metazoa</taxon>
        <taxon>Ecdysozoa</taxon>
        <taxon>Arthropoda</taxon>
        <taxon>Crustacea</taxon>
        <taxon>Multicrustacea</taxon>
        <taxon>Malacostraca</taxon>
        <taxon>Eumalacostraca</taxon>
        <taxon>Eucarida</taxon>
        <taxon>Decapoda</taxon>
        <taxon>Pleocyemata</taxon>
        <taxon>Brachyura</taxon>
        <taxon>Eubrachyura</taxon>
        <taxon>Grapsoidea</taxon>
        <taxon>Varunidae</taxon>
        <taxon>Eriocheir</taxon>
    </lineage>
</organism>
<reference evidence="7 8" key="1">
    <citation type="journal article" date="2012" name="Peptides">
        <title>Reproductive function of Selenoprotein M in Chinese mitten crabs (Eriocheir sinesis).</title>
        <authorList>
            <person name="Lu W."/>
            <person name="Li W.W."/>
            <person name="Jin X.K."/>
            <person name="He L."/>
            <person name="Jiang H."/>
            <person name="Wang Q."/>
        </authorList>
    </citation>
    <scope>NUCLEOTIDE SEQUENCE [MRNA]</scope>
    <scope>FUNCTION</scope>
    <scope>TISSUE SPECIFICITY</scope>
    <scope>DEVELOPMENTAL STAGE</scope>
    <source>
        <tissue evidence="5">Hepatopancreas</tissue>
    </source>
</reference>
<feature type="signal peptide" evidence="3">
    <location>
        <begin position="1"/>
        <end position="19"/>
    </location>
</feature>
<feature type="chain" id="PRO_0000416969" description="Selenoprotein M" evidence="3">
    <location>
        <begin position="20"/>
        <end position="129"/>
    </location>
</feature>
<feature type="region of interest" description="Disordered" evidence="4">
    <location>
        <begin position="107"/>
        <end position="129"/>
    </location>
</feature>
<feature type="short sequence motif" description="Prevents secretion from ER" evidence="3">
    <location>
        <begin position="126"/>
        <end position="129"/>
    </location>
</feature>
<feature type="active site" description="Nucleophile" evidence="1">
    <location>
        <position position="35"/>
    </location>
</feature>
<feature type="active site" description="Nucleophile" evidence="1">
    <location>
        <position position="38"/>
    </location>
</feature>
<feature type="non-standard amino acid" description="Selenocysteine" evidence="5">
    <location>
        <position position="38"/>
    </location>
</feature>
<name>SELM_ERISI</name>
<keyword id="KW-0256">Endoplasmic reticulum</keyword>
<keyword id="KW-0711">Selenium</keyword>
<keyword id="KW-0712">Selenocysteine</keyword>
<keyword id="KW-0732">Signal</keyword>
<accession>G4WAW9</accession>
<gene>
    <name evidence="2" type="primary">Selenom</name>
    <name evidence="8" type="synonym">SelM</name>
</gene>